<protein>
    <recommendedName>
        <fullName evidence="1">Glycerol kinase</fullName>
        <ecNumber evidence="1">2.7.1.30</ecNumber>
    </recommendedName>
    <alternativeName>
        <fullName evidence="1">ATP:glycerol 3-phosphotransferase</fullName>
    </alternativeName>
    <alternativeName>
        <fullName evidence="1">Glycerokinase</fullName>
        <shortName evidence="1">GK</shortName>
    </alternativeName>
</protein>
<reference key="1">
    <citation type="submission" date="2008-05" db="EMBL/GenBank/DDBJ databases">
        <title>Complete sequence of Shigella boydii serotype 18 strain BS512.</title>
        <authorList>
            <person name="Rasko D.A."/>
            <person name="Rosovitz M."/>
            <person name="Maurelli A.T."/>
            <person name="Myers G."/>
            <person name="Seshadri R."/>
            <person name="Cer R."/>
            <person name="Jiang L."/>
            <person name="Ravel J."/>
            <person name="Sebastian Y."/>
        </authorList>
    </citation>
    <scope>NUCLEOTIDE SEQUENCE [LARGE SCALE GENOMIC DNA]</scope>
    <source>
        <strain>CDC 3083-94 / BS512</strain>
    </source>
</reference>
<keyword id="KW-0021">Allosteric enzyme</keyword>
<keyword id="KW-0067">ATP-binding</keyword>
<keyword id="KW-0319">Glycerol metabolism</keyword>
<keyword id="KW-0418">Kinase</keyword>
<keyword id="KW-0479">Metal-binding</keyword>
<keyword id="KW-0547">Nucleotide-binding</keyword>
<keyword id="KW-1185">Reference proteome</keyword>
<keyword id="KW-0808">Transferase</keyword>
<keyword id="KW-0862">Zinc</keyword>
<proteinExistence type="inferred from homology"/>
<gene>
    <name evidence="1" type="primary">glpK</name>
    <name type="ordered locus">SbBS512_E4408</name>
</gene>
<sequence>MTEKKYIVALDQGTTSSRAVVMDHDANIISVSQREFEQIYPKPGWVEHDPMEIWATQSSTLVEVLAKADISSDQIAAIGITNQRETTIVWEKETGKPIYNAIVWQCRRTAEICEHLKRDGLEDYIRSNTGLVIDPYFSGTKVKWILDHVEGSRERARRGELLFGTVDTWLIWKMTQGRVHVTDYTNASRTMLFNIHTLGWDDKMLEVLDIPREMLPEVRRSSEVYGQTNIGGKGGTRIPISGIAGDQQAALFGQLCVKEGMAKNTYGTGCFMLMNTGEKAVKSENGLLTTIACGPTGEVNYALEGAVFMAGASIQWLRDEMKLINDAYDSEYFATKVQNTNGVYVVPAFTGLGAPYWDPYARGAIFGLTRGVNANHIIRATLESIAYQTRDVLEAMQADSGIRLHALRVDGGAVANNFLMQFQSDILGTRVERPEVREVTALGAAYLAGLAVGFWQNLDELQEKAVIEREFRPGIETTERNYRYAGWKKAVKRAMAWEKHDE</sequence>
<name>GLPK_SHIB3</name>
<accession>B2TWC2</accession>
<dbReference type="EC" id="2.7.1.30" evidence="1"/>
<dbReference type="EMBL" id="CP001063">
    <property type="protein sequence ID" value="ACD09038.1"/>
    <property type="molecule type" value="Genomic_DNA"/>
</dbReference>
<dbReference type="RefSeq" id="WP_000136795.1">
    <property type="nucleotide sequence ID" value="NC_010658.1"/>
</dbReference>
<dbReference type="SMR" id="B2TWC2"/>
<dbReference type="STRING" id="344609.SbBS512_E4408"/>
<dbReference type="KEGG" id="sbc:SbBS512_E4408"/>
<dbReference type="HOGENOM" id="CLU_009281_2_3_6"/>
<dbReference type="UniPathway" id="UPA00618">
    <property type="reaction ID" value="UER00672"/>
</dbReference>
<dbReference type="Proteomes" id="UP000001030">
    <property type="component" value="Chromosome"/>
</dbReference>
<dbReference type="GO" id="GO:0005829">
    <property type="term" value="C:cytosol"/>
    <property type="evidence" value="ECO:0007669"/>
    <property type="project" value="TreeGrafter"/>
</dbReference>
<dbReference type="GO" id="GO:0005524">
    <property type="term" value="F:ATP binding"/>
    <property type="evidence" value="ECO:0007669"/>
    <property type="project" value="UniProtKB-UniRule"/>
</dbReference>
<dbReference type="GO" id="GO:0004370">
    <property type="term" value="F:glycerol kinase activity"/>
    <property type="evidence" value="ECO:0000250"/>
    <property type="project" value="UniProtKB"/>
</dbReference>
<dbReference type="GO" id="GO:0046872">
    <property type="term" value="F:metal ion binding"/>
    <property type="evidence" value="ECO:0007669"/>
    <property type="project" value="UniProtKB-KW"/>
</dbReference>
<dbReference type="GO" id="GO:0019563">
    <property type="term" value="P:glycerol catabolic process"/>
    <property type="evidence" value="ECO:0007669"/>
    <property type="project" value="UniProtKB-UniRule"/>
</dbReference>
<dbReference type="GO" id="GO:0006071">
    <property type="term" value="P:glycerol metabolic process"/>
    <property type="evidence" value="ECO:0000250"/>
    <property type="project" value="UniProtKB"/>
</dbReference>
<dbReference type="GO" id="GO:0006072">
    <property type="term" value="P:glycerol-3-phosphate metabolic process"/>
    <property type="evidence" value="ECO:0007669"/>
    <property type="project" value="InterPro"/>
</dbReference>
<dbReference type="CDD" id="cd07786">
    <property type="entry name" value="FGGY_EcGK_like"/>
    <property type="match status" value="1"/>
</dbReference>
<dbReference type="FunFam" id="3.30.420.40:FF:000007">
    <property type="entry name" value="Glycerol kinase"/>
    <property type="match status" value="1"/>
</dbReference>
<dbReference type="FunFam" id="3.30.420.40:FF:000008">
    <property type="entry name" value="Glycerol kinase"/>
    <property type="match status" value="1"/>
</dbReference>
<dbReference type="Gene3D" id="3.30.420.40">
    <property type="match status" value="2"/>
</dbReference>
<dbReference type="HAMAP" id="MF_00186">
    <property type="entry name" value="Glycerol_kin"/>
    <property type="match status" value="1"/>
</dbReference>
<dbReference type="InterPro" id="IPR043129">
    <property type="entry name" value="ATPase_NBD"/>
</dbReference>
<dbReference type="InterPro" id="IPR000577">
    <property type="entry name" value="Carb_kinase_FGGY"/>
</dbReference>
<dbReference type="InterPro" id="IPR018483">
    <property type="entry name" value="Carb_kinase_FGGY_CS"/>
</dbReference>
<dbReference type="InterPro" id="IPR018485">
    <property type="entry name" value="FGGY_C"/>
</dbReference>
<dbReference type="InterPro" id="IPR018484">
    <property type="entry name" value="FGGY_N"/>
</dbReference>
<dbReference type="InterPro" id="IPR005999">
    <property type="entry name" value="Glycerol_kin"/>
</dbReference>
<dbReference type="NCBIfam" id="TIGR01311">
    <property type="entry name" value="glycerol_kin"/>
    <property type="match status" value="1"/>
</dbReference>
<dbReference type="NCBIfam" id="NF000756">
    <property type="entry name" value="PRK00047.1"/>
    <property type="match status" value="1"/>
</dbReference>
<dbReference type="PANTHER" id="PTHR10196:SF69">
    <property type="entry name" value="GLYCEROL KINASE"/>
    <property type="match status" value="1"/>
</dbReference>
<dbReference type="PANTHER" id="PTHR10196">
    <property type="entry name" value="SUGAR KINASE"/>
    <property type="match status" value="1"/>
</dbReference>
<dbReference type="Pfam" id="PF02782">
    <property type="entry name" value="FGGY_C"/>
    <property type="match status" value="1"/>
</dbReference>
<dbReference type="Pfam" id="PF00370">
    <property type="entry name" value="FGGY_N"/>
    <property type="match status" value="1"/>
</dbReference>
<dbReference type="PIRSF" id="PIRSF000538">
    <property type="entry name" value="GlpK"/>
    <property type="match status" value="1"/>
</dbReference>
<dbReference type="SUPFAM" id="SSF53067">
    <property type="entry name" value="Actin-like ATPase domain"/>
    <property type="match status" value="2"/>
</dbReference>
<dbReference type="PROSITE" id="PS00933">
    <property type="entry name" value="FGGY_KINASES_1"/>
    <property type="match status" value="1"/>
</dbReference>
<dbReference type="PROSITE" id="PS00445">
    <property type="entry name" value="FGGY_KINASES_2"/>
    <property type="match status" value="1"/>
</dbReference>
<organism>
    <name type="scientific">Shigella boydii serotype 18 (strain CDC 3083-94 / BS512)</name>
    <dbReference type="NCBI Taxonomy" id="344609"/>
    <lineage>
        <taxon>Bacteria</taxon>
        <taxon>Pseudomonadati</taxon>
        <taxon>Pseudomonadota</taxon>
        <taxon>Gammaproteobacteria</taxon>
        <taxon>Enterobacterales</taxon>
        <taxon>Enterobacteriaceae</taxon>
        <taxon>Shigella</taxon>
    </lineage>
</organism>
<comment type="function">
    <text evidence="1">Key enzyme in the regulation of glycerol uptake and metabolism. Catalyzes the phosphorylation of glycerol to yield sn-glycerol 3-phosphate.</text>
</comment>
<comment type="catalytic activity">
    <reaction evidence="1">
        <text>glycerol + ATP = sn-glycerol 3-phosphate + ADP + H(+)</text>
        <dbReference type="Rhea" id="RHEA:21644"/>
        <dbReference type="ChEBI" id="CHEBI:15378"/>
        <dbReference type="ChEBI" id="CHEBI:17754"/>
        <dbReference type="ChEBI" id="CHEBI:30616"/>
        <dbReference type="ChEBI" id="CHEBI:57597"/>
        <dbReference type="ChEBI" id="CHEBI:456216"/>
        <dbReference type="EC" id="2.7.1.30"/>
    </reaction>
</comment>
<comment type="activity regulation">
    <text evidence="1">Activity of this regulatory enzyme is affected by several metabolites. Allosterically and non-competitively inhibited by fructose 1,6-bisphosphate (FBP) and unphosphorylated phosphocarrier protein EIIA-Glc (III-Glc), an integral component of the bacterial phosphotransferase (PTS) system.</text>
</comment>
<comment type="pathway">
    <text evidence="1">Polyol metabolism; glycerol degradation via glycerol kinase pathway; sn-glycerol 3-phosphate from glycerol: step 1/1.</text>
</comment>
<comment type="subunit">
    <text evidence="1">Homotetramer and homodimer (in equilibrium). Heterodimer with EIIA-Glc. Binds 1 zinc ion per glycerol kinase EIIA-Glc dimer. The zinc ion is important for dimerization.</text>
</comment>
<comment type="similarity">
    <text evidence="1">Belongs to the FGGY kinase family.</text>
</comment>
<evidence type="ECO:0000255" key="1">
    <source>
        <dbReference type="HAMAP-Rule" id="MF_00186"/>
    </source>
</evidence>
<feature type="chain" id="PRO_1000098763" description="Glycerol kinase">
    <location>
        <begin position="1"/>
        <end position="502"/>
    </location>
</feature>
<feature type="binding site" evidence="1">
    <location>
        <position position="14"/>
    </location>
    <ligand>
        <name>ADP</name>
        <dbReference type="ChEBI" id="CHEBI:456216"/>
    </ligand>
</feature>
<feature type="binding site" evidence="1">
    <location>
        <position position="14"/>
    </location>
    <ligand>
        <name>ATP</name>
        <dbReference type="ChEBI" id="CHEBI:30616"/>
    </ligand>
</feature>
<feature type="binding site" evidence="1">
    <location>
        <position position="14"/>
    </location>
    <ligand>
        <name>sn-glycerol 3-phosphate</name>
        <dbReference type="ChEBI" id="CHEBI:57597"/>
    </ligand>
</feature>
<feature type="binding site" evidence="1">
    <location>
        <position position="15"/>
    </location>
    <ligand>
        <name>ATP</name>
        <dbReference type="ChEBI" id="CHEBI:30616"/>
    </ligand>
</feature>
<feature type="binding site" evidence="1">
    <location>
        <position position="16"/>
    </location>
    <ligand>
        <name>ATP</name>
        <dbReference type="ChEBI" id="CHEBI:30616"/>
    </ligand>
</feature>
<feature type="binding site" evidence="1">
    <location>
        <position position="18"/>
    </location>
    <ligand>
        <name>ADP</name>
        <dbReference type="ChEBI" id="CHEBI:456216"/>
    </ligand>
</feature>
<feature type="binding site" evidence="1">
    <location>
        <position position="84"/>
    </location>
    <ligand>
        <name>glycerol</name>
        <dbReference type="ChEBI" id="CHEBI:17754"/>
    </ligand>
</feature>
<feature type="binding site" evidence="1">
    <location>
        <position position="84"/>
    </location>
    <ligand>
        <name>sn-glycerol 3-phosphate</name>
        <dbReference type="ChEBI" id="CHEBI:57597"/>
    </ligand>
</feature>
<feature type="binding site" evidence="1">
    <location>
        <position position="85"/>
    </location>
    <ligand>
        <name>glycerol</name>
        <dbReference type="ChEBI" id="CHEBI:17754"/>
    </ligand>
</feature>
<feature type="binding site" evidence="1">
    <location>
        <position position="85"/>
    </location>
    <ligand>
        <name>sn-glycerol 3-phosphate</name>
        <dbReference type="ChEBI" id="CHEBI:57597"/>
    </ligand>
</feature>
<feature type="binding site" evidence="1">
    <location>
        <position position="136"/>
    </location>
    <ligand>
        <name>glycerol</name>
        <dbReference type="ChEBI" id="CHEBI:17754"/>
    </ligand>
</feature>
<feature type="binding site" evidence="1">
    <location>
        <position position="136"/>
    </location>
    <ligand>
        <name>sn-glycerol 3-phosphate</name>
        <dbReference type="ChEBI" id="CHEBI:57597"/>
    </ligand>
</feature>
<feature type="binding site" evidence="1">
    <location>
        <position position="246"/>
    </location>
    <ligand>
        <name>glycerol</name>
        <dbReference type="ChEBI" id="CHEBI:17754"/>
    </ligand>
</feature>
<feature type="binding site" evidence="1">
    <location>
        <position position="246"/>
    </location>
    <ligand>
        <name>sn-glycerol 3-phosphate</name>
        <dbReference type="ChEBI" id="CHEBI:57597"/>
    </ligand>
</feature>
<feature type="binding site" evidence="1">
    <location>
        <position position="247"/>
    </location>
    <ligand>
        <name>glycerol</name>
        <dbReference type="ChEBI" id="CHEBI:17754"/>
    </ligand>
</feature>
<feature type="binding site" evidence="1">
    <location>
        <position position="268"/>
    </location>
    <ligand>
        <name>ADP</name>
        <dbReference type="ChEBI" id="CHEBI:456216"/>
    </ligand>
</feature>
<feature type="binding site" evidence="1">
    <location>
        <position position="268"/>
    </location>
    <ligand>
        <name>ATP</name>
        <dbReference type="ChEBI" id="CHEBI:30616"/>
    </ligand>
</feature>
<feature type="binding site" evidence="1">
    <location>
        <position position="311"/>
    </location>
    <ligand>
        <name>ADP</name>
        <dbReference type="ChEBI" id="CHEBI:456216"/>
    </ligand>
</feature>
<feature type="binding site" evidence="1">
    <location>
        <position position="311"/>
    </location>
    <ligand>
        <name>ATP</name>
        <dbReference type="ChEBI" id="CHEBI:30616"/>
    </ligand>
</feature>
<feature type="binding site" evidence="1">
    <location>
        <position position="315"/>
    </location>
    <ligand>
        <name>ATP</name>
        <dbReference type="ChEBI" id="CHEBI:30616"/>
    </ligand>
</feature>
<feature type="binding site" evidence="1">
    <location>
        <position position="412"/>
    </location>
    <ligand>
        <name>ADP</name>
        <dbReference type="ChEBI" id="CHEBI:456216"/>
    </ligand>
</feature>
<feature type="binding site" evidence="1">
    <location>
        <position position="412"/>
    </location>
    <ligand>
        <name>ATP</name>
        <dbReference type="ChEBI" id="CHEBI:30616"/>
    </ligand>
</feature>
<feature type="binding site" evidence="1">
    <location>
        <position position="416"/>
    </location>
    <ligand>
        <name>ADP</name>
        <dbReference type="ChEBI" id="CHEBI:456216"/>
    </ligand>
</feature>